<comment type="function">
    <text evidence="1">Catalyzes the cyclization of GTP to (8S)-3',8-cyclo-7,8-dihydroguanosine 5'-triphosphate.</text>
</comment>
<comment type="catalytic activity">
    <reaction evidence="1">
        <text>GTP + AH2 + S-adenosyl-L-methionine = (8S)-3',8-cyclo-7,8-dihydroguanosine 5'-triphosphate + 5'-deoxyadenosine + L-methionine + A + H(+)</text>
        <dbReference type="Rhea" id="RHEA:49576"/>
        <dbReference type="ChEBI" id="CHEBI:13193"/>
        <dbReference type="ChEBI" id="CHEBI:15378"/>
        <dbReference type="ChEBI" id="CHEBI:17319"/>
        <dbReference type="ChEBI" id="CHEBI:17499"/>
        <dbReference type="ChEBI" id="CHEBI:37565"/>
        <dbReference type="ChEBI" id="CHEBI:57844"/>
        <dbReference type="ChEBI" id="CHEBI:59789"/>
        <dbReference type="ChEBI" id="CHEBI:131766"/>
        <dbReference type="EC" id="4.1.99.22"/>
    </reaction>
</comment>
<comment type="cofactor">
    <cofactor evidence="1">
        <name>[4Fe-4S] cluster</name>
        <dbReference type="ChEBI" id="CHEBI:49883"/>
    </cofactor>
    <text evidence="1">Binds 2 [4Fe-4S] clusters. Binds 1 [4Fe-4S] cluster coordinated with 3 cysteines and an exchangeable S-adenosyl-L-methionine and 1 [4Fe-4S] cluster coordinated with 3 cysteines and the GTP-derived substrate.</text>
</comment>
<comment type="pathway">
    <text evidence="1">Cofactor biosynthesis; molybdopterin biosynthesis.</text>
</comment>
<comment type="subunit">
    <text evidence="1">Monomer and homodimer.</text>
</comment>
<comment type="similarity">
    <text evidence="1">Belongs to the radical SAM superfamily. MoaA family.</text>
</comment>
<sequence length="329" mass="37002">MASQLTDAFARKFYYLRLSITDVCNFRCTYCLPDGYKPGGVTNNGFLTVDEIRRVTRAFASLGTEKVRLTGGEPSLRRDFTDIIAAVGENDAIRQIAVTTNGYRLARDAANWREAGLTGVNVSVDSLDARQFHAITGQDKFRQVMAGIDAAFDAGFEKVKVNTVLMRDVNHHQLDTFLAWIQPRPIQLRFIELMETGEGSDLFRKHHISGQVLRDELIKRGWIHQLRQRSDGPAQVFCHPDYAGEIGLIMPYEKDFCATCNRLRVSSVGKLHLCLFGDGGVSLRDLLQDDAQQYALEERISDALREKKQTHFLHQSNTGITQNLSYIGG</sequence>
<name>MOAA_SALPA</name>
<organism>
    <name type="scientific">Salmonella paratyphi A (strain ATCC 9150 / SARB42)</name>
    <dbReference type="NCBI Taxonomy" id="295319"/>
    <lineage>
        <taxon>Bacteria</taxon>
        <taxon>Pseudomonadati</taxon>
        <taxon>Pseudomonadota</taxon>
        <taxon>Gammaproteobacteria</taxon>
        <taxon>Enterobacterales</taxon>
        <taxon>Enterobacteriaceae</taxon>
        <taxon>Salmonella</taxon>
    </lineage>
</organism>
<accession>Q5PG37</accession>
<evidence type="ECO:0000255" key="1">
    <source>
        <dbReference type="HAMAP-Rule" id="MF_01225"/>
    </source>
</evidence>
<evidence type="ECO:0000255" key="2">
    <source>
        <dbReference type="PROSITE-ProRule" id="PRU01266"/>
    </source>
</evidence>
<dbReference type="EC" id="4.1.99.22" evidence="1"/>
<dbReference type="EMBL" id="CP000026">
    <property type="protein sequence ID" value="AAV77860.1"/>
    <property type="molecule type" value="Genomic_DNA"/>
</dbReference>
<dbReference type="RefSeq" id="WP_000168180.1">
    <property type="nucleotide sequence ID" value="NC_006511.1"/>
</dbReference>
<dbReference type="SMR" id="Q5PG37"/>
<dbReference type="KEGG" id="spt:SPA1950"/>
<dbReference type="HOGENOM" id="CLU_009273_0_1_6"/>
<dbReference type="UniPathway" id="UPA00344"/>
<dbReference type="Proteomes" id="UP000008185">
    <property type="component" value="Chromosome"/>
</dbReference>
<dbReference type="GO" id="GO:0051539">
    <property type="term" value="F:4 iron, 4 sulfur cluster binding"/>
    <property type="evidence" value="ECO:0007669"/>
    <property type="project" value="UniProtKB-UniRule"/>
</dbReference>
<dbReference type="GO" id="GO:0061799">
    <property type="term" value="F:cyclic pyranopterin monophosphate synthase activity"/>
    <property type="evidence" value="ECO:0007669"/>
    <property type="project" value="TreeGrafter"/>
</dbReference>
<dbReference type="GO" id="GO:0061798">
    <property type="term" value="F:GTP 3',8'-cyclase activity"/>
    <property type="evidence" value="ECO:0007669"/>
    <property type="project" value="UniProtKB-UniRule"/>
</dbReference>
<dbReference type="GO" id="GO:0005525">
    <property type="term" value="F:GTP binding"/>
    <property type="evidence" value="ECO:0007669"/>
    <property type="project" value="UniProtKB-UniRule"/>
</dbReference>
<dbReference type="GO" id="GO:0046872">
    <property type="term" value="F:metal ion binding"/>
    <property type="evidence" value="ECO:0007669"/>
    <property type="project" value="UniProtKB-KW"/>
</dbReference>
<dbReference type="GO" id="GO:1904047">
    <property type="term" value="F:S-adenosyl-L-methionine binding"/>
    <property type="evidence" value="ECO:0007669"/>
    <property type="project" value="UniProtKB-UniRule"/>
</dbReference>
<dbReference type="GO" id="GO:0006777">
    <property type="term" value="P:Mo-molybdopterin cofactor biosynthetic process"/>
    <property type="evidence" value="ECO:0007669"/>
    <property type="project" value="UniProtKB-UniRule"/>
</dbReference>
<dbReference type="CDD" id="cd01335">
    <property type="entry name" value="Radical_SAM"/>
    <property type="match status" value="1"/>
</dbReference>
<dbReference type="CDD" id="cd21117">
    <property type="entry name" value="Twitch_MoaA"/>
    <property type="match status" value="1"/>
</dbReference>
<dbReference type="FunFam" id="3.20.20.70:FF:000057">
    <property type="entry name" value="GTP 3',8-cyclase"/>
    <property type="match status" value="1"/>
</dbReference>
<dbReference type="Gene3D" id="3.20.20.70">
    <property type="entry name" value="Aldolase class I"/>
    <property type="match status" value="1"/>
</dbReference>
<dbReference type="HAMAP" id="MF_01225_B">
    <property type="entry name" value="MoaA_B"/>
    <property type="match status" value="1"/>
</dbReference>
<dbReference type="InterPro" id="IPR013785">
    <property type="entry name" value="Aldolase_TIM"/>
</dbReference>
<dbReference type="InterPro" id="IPR006638">
    <property type="entry name" value="Elp3/MiaA/NifB-like_rSAM"/>
</dbReference>
<dbReference type="InterPro" id="IPR013483">
    <property type="entry name" value="MoaA"/>
</dbReference>
<dbReference type="InterPro" id="IPR000385">
    <property type="entry name" value="MoaA_NifB_PqqE_Fe-S-bd_CS"/>
</dbReference>
<dbReference type="InterPro" id="IPR010505">
    <property type="entry name" value="MoaA_twitch"/>
</dbReference>
<dbReference type="InterPro" id="IPR050105">
    <property type="entry name" value="MoCo_biosynth_MoaA/MoaC"/>
</dbReference>
<dbReference type="InterPro" id="IPR007197">
    <property type="entry name" value="rSAM"/>
</dbReference>
<dbReference type="NCBIfam" id="TIGR02666">
    <property type="entry name" value="moaA"/>
    <property type="match status" value="1"/>
</dbReference>
<dbReference type="PANTHER" id="PTHR22960:SF28">
    <property type="entry name" value="GTP 3',8-CYCLASE"/>
    <property type="match status" value="1"/>
</dbReference>
<dbReference type="PANTHER" id="PTHR22960">
    <property type="entry name" value="MOLYBDOPTERIN COFACTOR SYNTHESIS PROTEIN A"/>
    <property type="match status" value="1"/>
</dbReference>
<dbReference type="Pfam" id="PF06463">
    <property type="entry name" value="Mob_synth_C"/>
    <property type="match status" value="1"/>
</dbReference>
<dbReference type="Pfam" id="PF04055">
    <property type="entry name" value="Radical_SAM"/>
    <property type="match status" value="1"/>
</dbReference>
<dbReference type="SFLD" id="SFLDG01383">
    <property type="entry name" value="cyclic_pyranopterin_phosphate"/>
    <property type="match status" value="1"/>
</dbReference>
<dbReference type="SFLD" id="SFLDS00029">
    <property type="entry name" value="Radical_SAM"/>
    <property type="match status" value="1"/>
</dbReference>
<dbReference type="SMART" id="SM00729">
    <property type="entry name" value="Elp3"/>
    <property type="match status" value="1"/>
</dbReference>
<dbReference type="SUPFAM" id="SSF102114">
    <property type="entry name" value="Radical SAM enzymes"/>
    <property type="match status" value="1"/>
</dbReference>
<dbReference type="PROSITE" id="PS01305">
    <property type="entry name" value="MOAA_NIFB_PQQE"/>
    <property type="match status" value="1"/>
</dbReference>
<dbReference type="PROSITE" id="PS51918">
    <property type="entry name" value="RADICAL_SAM"/>
    <property type="match status" value="1"/>
</dbReference>
<reference key="1">
    <citation type="journal article" date="2004" name="Nat. Genet.">
        <title>Comparison of genome degradation in Paratyphi A and Typhi, human-restricted serovars of Salmonella enterica that cause typhoid.</title>
        <authorList>
            <person name="McClelland M."/>
            <person name="Sanderson K.E."/>
            <person name="Clifton S.W."/>
            <person name="Latreille P."/>
            <person name="Porwollik S."/>
            <person name="Sabo A."/>
            <person name="Meyer R."/>
            <person name="Bieri T."/>
            <person name="Ozersky P."/>
            <person name="McLellan M."/>
            <person name="Harkins C.R."/>
            <person name="Wang C."/>
            <person name="Nguyen C."/>
            <person name="Berghoff A."/>
            <person name="Elliott G."/>
            <person name="Kohlberg S."/>
            <person name="Strong C."/>
            <person name="Du F."/>
            <person name="Carter J."/>
            <person name="Kremizki C."/>
            <person name="Layman D."/>
            <person name="Leonard S."/>
            <person name="Sun H."/>
            <person name="Fulton L."/>
            <person name="Nash W."/>
            <person name="Miner T."/>
            <person name="Minx P."/>
            <person name="Delehaunty K."/>
            <person name="Fronick C."/>
            <person name="Magrini V."/>
            <person name="Nhan M."/>
            <person name="Warren W."/>
            <person name="Florea L."/>
            <person name="Spieth J."/>
            <person name="Wilson R.K."/>
        </authorList>
    </citation>
    <scope>NUCLEOTIDE SEQUENCE [LARGE SCALE GENOMIC DNA]</scope>
    <source>
        <strain>ATCC 9150 / SARB42</strain>
    </source>
</reference>
<feature type="chain" id="PRO_1000054222" description="GTP 3',8-cyclase">
    <location>
        <begin position="1"/>
        <end position="329"/>
    </location>
</feature>
<feature type="domain" description="Radical SAM core" evidence="2">
    <location>
        <begin position="8"/>
        <end position="234"/>
    </location>
</feature>
<feature type="binding site" evidence="1">
    <location>
        <position position="17"/>
    </location>
    <ligand>
        <name>GTP</name>
        <dbReference type="ChEBI" id="CHEBI:37565"/>
    </ligand>
</feature>
<feature type="binding site" evidence="1">
    <location>
        <position position="24"/>
    </location>
    <ligand>
        <name>[4Fe-4S] cluster</name>
        <dbReference type="ChEBI" id="CHEBI:49883"/>
        <label>1</label>
        <note>4Fe-4S-S-AdoMet</note>
    </ligand>
</feature>
<feature type="binding site" evidence="1">
    <location>
        <position position="28"/>
    </location>
    <ligand>
        <name>[4Fe-4S] cluster</name>
        <dbReference type="ChEBI" id="CHEBI:49883"/>
        <label>1</label>
        <note>4Fe-4S-S-AdoMet</note>
    </ligand>
</feature>
<feature type="binding site" evidence="1">
    <location>
        <position position="30"/>
    </location>
    <ligand>
        <name>S-adenosyl-L-methionine</name>
        <dbReference type="ChEBI" id="CHEBI:59789"/>
    </ligand>
</feature>
<feature type="binding site" evidence="1">
    <location>
        <position position="31"/>
    </location>
    <ligand>
        <name>[4Fe-4S] cluster</name>
        <dbReference type="ChEBI" id="CHEBI:49883"/>
        <label>1</label>
        <note>4Fe-4S-S-AdoMet</note>
    </ligand>
</feature>
<feature type="binding site" evidence="1">
    <location>
        <position position="68"/>
    </location>
    <ligand>
        <name>GTP</name>
        <dbReference type="ChEBI" id="CHEBI:37565"/>
    </ligand>
</feature>
<feature type="binding site" evidence="1">
    <location>
        <position position="72"/>
    </location>
    <ligand>
        <name>S-adenosyl-L-methionine</name>
        <dbReference type="ChEBI" id="CHEBI:59789"/>
    </ligand>
</feature>
<feature type="binding site" evidence="1">
    <location>
        <position position="99"/>
    </location>
    <ligand>
        <name>GTP</name>
        <dbReference type="ChEBI" id="CHEBI:37565"/>
    </ligand>
</feature>
<feature type="binding site" evidence="1">
    <location>
        <position position="123"/>
    </location>
    <ligand>
        <name>S-adenosyl-L-methionine</name>
        <dbReference type="ChEBI" id="CHEBI:59789"/>
    </ligand>
</feature>
<feature type="binding site" evidence="1">
    <location>
        <position position="160"/>
    </location>
    <ligand>
        <name>GTP</name>
        <dbReference type="ChEBI" id="CHEBI:37565"/>
    </ligand>
</feature>
<feature type="binding site" evidence="1">
    <location>
        <position position="194"/>
    </location>
    <ligand>
        <name>S-adenosyl-L-methionine</name>
        <dbReference type="ChEBI" id="CHEBI:59789"/>
    </ligand>
</feature>
<feature type="binding site" evidence="1">
    <location>
        <position position="257"/>
    </location>
    <ligand>
        <name>[4Fe-4S] cluster</name>
        <dbReference type="ChEBI" id="CHEBI:49883"/>
        <label>2</label>
        <note>4Fe-4S-substrate</note>
    </ligand>
</feature>
<feature type="binding site" evidence="1">
    <location>
        <position position="260"/>
    </location>
    <ligand>
        <name>[4Fe-4S] cluster</name>
        <dbReference type="ChEBI" id="CHEBI:49883"/>
        <label>2</label>
        <note>4Fe-4S-substrate</note>
    </ligand>
</feature>
<feature type="binding site" evidence="1">
    <location>
        <begin position="262"/>
        <end position="264"/>
    </location>
    <ligand>
        <name>GTP</name>
        <dbReference type="ChEBI" id="CHEBI:37565"/>
    </ligand>
</feature>
<feature type="binding site" evidence="1">
    <location>
        <position position="274"/>
    </location>
    <ligand>
        <name>[4Fe-4S] cluster</name>
        <dbReference type="ChEBI" id="CHEBI:49883"/>
        <label>2</label>
        <note>4Fe-4S-substrate</note>
    </ligand>
</feature>
<keyword id="KW-0004">4Fe-4S</keyword>
<keyword id="KW-0342">GTP-binding</keyword>
<keyword id="KW-0408">Iron</keyword>
<keyword id="KW-0411">Iron-sulfur</keyword>
<keyword id="KW-0456">Lyase</keyword>
<keyword id="KW-0479">Metal-binding</keyword>
<keyword id="KW-0501">Molybdenum cofactor biosynthesis</keyword>
<keyword id="KW-0547">Nucleotide-binding</keyword>
<keyword id="KW-0949">S-adenosyl-L-methionine</keyword>
<proteinExistence type="inferred from homology"/>
<gene>
    <name evidence="1" type="primary">moaA</name>
    <name type="ordered locus">SPA1950</name>
</gene>
<protein>
    <recommendedName>
        <fullName evidence="1">GTP 3',8-cyclase</fullName>
        <ecNumber evidence="1">4.1.99.22</ecNumber>
    </recommendedName>
    <alternativeName>
        <fullName evidence="1">Molybdenum cofactor biosynthesis protein A</fullName>
    </alternativeName>
</protein>